<proteinExistence type="inferred from homology"/>
<organism>
    <name type="scientific">Burkholderia pseudomallei (strain K96243)</name>
    <dbReference type="NCBI Taxonomy" id="272560"/>
    <lineage>
        <taxon>Bacteria</taxon>
        <taxon>Pseudomonadati</taxon>
        <taxon>Pseudomonadota</taxon>
        <taxon>Betaproteobacteria</taxon>
        <taxon>Burkholderiales</taxon>
        <taxon>Burkholderiaceae</taxon>
        <taxon>Burkholderia</taxon>
        <taxon>pseudomallei group</taxon>
    </lineage>
</organism>
<comment type="similarity">
    <text evidence="1">Belongs to the bacterial ribosomal protein bL32 family.</text>
</comment>
<reference key="1">
    <citation type="journal article" date="2004" name="Proc. Natl. Acad. Sci. U.S.A.">
        <title>Genomic plasticity of the causative agent of melioidosis, Burkholderia pseudomallei.</title>
        <authorList>
            <person name="Holden M.T.G."/>
            <person name="Titball R.W."/>
            <person name="Peacock S.J."/>
            <person name="Cerdeno-Tarraga A.-M."/>
            <person name="Atkins T."/>
            <person name="Crossman L.C."/>
            <person name="Pitt T."/>
            <person name="Churcher C."/>
            <person name="Mungall K.L."/>
            <person name="Bentley S.D."/>
            <person name="Sebaihia M."/>
            <person name="Thomson N.R."/>
            <person name="Bason N."/>
            <person name="Beacham I.R."/>
            <person name="Brooks K."/>
            <person name="Brown K.A."/>
            <person name="Brown N.F."/>
            <person name="Challis G.L."/>
            <person name="Cherevach I."/>
            <person name="Chillingworth T."/>
            <person name="Cronin A."/>
            <person name="Crossett B."/>
            <person name="Davis P."/>
            <person name="DeShazer D."/>
            <person name="Feltwell T."/>
            <person name="Fraser A."/>
            <person name="Hance Z."/>
            <person name="Hauser H."/>
            <person name="Holroyd S."/>
            <person name="Jagels K."/>
            <person name="Keith K.E."/>
            <person name="Maddison M."/>
            <person name="Moule S."/>
            <person name="Price C."/>
            <person name="Quail M.A."/>
            <person name="Rabbinowitsch E."/>
            <person name="Rutherford K."/>
            <person name="Sanders M."/>
            <person name="Simmonds M."/>
            <person name="Songsivilai S."/>
            <person name="Stevens K."/>
            <person name="Tumapa S."/>
            <person name="Vesaratchavest M."/>
            <person name="Whitehead S."/>
            <person name="Yeats C."/>
            <person name="Barrell B.G."/>
            <person name="Oyston P.C.F."/>
            <person name="Parkhill J."/>
        </authorList>
    </citation>
    <scope>NUCLEOTIDE SEQUENCE [LARGE SCALE GENOMIC DNA]</scope>
    <source>
        <strain>K96243</strain>
    </source>
</reference>
<feature type="chain" id="PRO_0000225709" description="Large ribosomal subunit protein bL32">
    <location>
        <begin position="1"/>
        <end position="59"/>
    </location>
</feature>
<feature type="region of interest" description="Disordered" evidence="2">
    <location>
        <begin position="1"/>
        <end position="59"/>
    </location>
</feature>
<feature type="compositionally biased region" description="Basic residues" evidence="2">
    <location>
        <begin position="49"/>
        <end position="59"/>
    </location>
</feature>
<evidence type="ECO:0000255" key="1">
    <source>
        <dbReference type="HAMAP-Rule" id="MF_00340"/>
    </source>
</evidence>
<evidence type="ECO:0000256" key="2">
    <source>
        <dbReference type="SAM" id="MobiDB-lite"/>
    </source>
</evidence>
<evidence type="ECO:0000305" key="3"/>
<keyword id="KW-1185">Reference proteome</keyword>
<keyword id="KW-0687">Ribonucleoprotein</keyword>
<keyword id="KW-0689">Ribosomal protein</keyword>
<dbReference type="EMBL" id="BX571965">
    <property type="protein sequence ID" value="CAH36447.1"/>
    <property type="molecule type" value="Genomic_DNA"/>
</dbReference>
<dbReference type="RefSeq" id="WP_004192741.1">
    <property type="nucleotide sequence ID" value="NZ_CP009538.1"/>
</dbReference>
<dbReference type="RefSeq" id="YP_109036.1">
    <property type="nucleotide sequence ID" value="NC_006350.1"/>
</dbReference>
<dbReference type="SMR" id="Q63S81"/>
<dbReference type="STRING" id="272560.BPSL2444"/>
<dbReference type="GeneID" id="93061024"/>
<dbReference type="KEGG" id="bps:BPSL2444"/>
<dbReference type="PATRIC" id="fig|272560.51.peg.2946"/>
<dbReference type="eggNOG" id="COG0333">
    <property type="taxonomic scope" value="Bacteria"/>
</dbReference>
<dbReference type="Proteomes" id="UP000000605">
    <property type="component" value="Chromosome 1"/>
</dbReference>
<dbReference type="GO" id="GO:0015934">
    <property type="term" value="C:large ribosomal subunit"/>
    <property type="evidence" value="ECO:0007669"/>
    <property type="project" value="InterPro"/>
</dbReference>
<dbReference type="GO" id="GO:0003735">
    <property type="term" value="F:structural constituent of ribosome"/>
    <property type="evidence" value="ECO:0007669"/>
    <property type="project" value="InterPro"/>
</dbReference>
<dbReference type="GO" id="GO:0006412">
    <property type="term" value="P:translation"/>
    <property type="evidence" value="ECO:0007669"/>
    <property type="project" value="UniProtKB-UniRule"/>
</dbReference>
<dbReference type="HAMAP" id="MF_00340">
    <property type="entry name" value="Ribosomal_bL32"/>
    <property type="match status" value="1"/>
</dbReference>
<dbReference type="InterPro" id="IPR002677">
    <property type="entry name" value="Ribosomal_bL32"/>
</dbReference>
<dbReference type="InterPro" id="IPR044957">
    <property type="entry name" value="Ribosomal_bL32_bact"/>
</dbReference>
<dbReference type="InterPro" id="IPR011332">
    <property type="entry name" value="Ribosomal_zn-bd"/>
</dbReference>
<dbReference type="NCBIfam" id="TIGR01031">
    <property type="entry name" value="rpmF_bact"/>
    <property type="match status" value="1"/>
</dbReference>
<dbReference type="PANTHER" id="PTHR35534">
    <property type="entry name" value="50S RIBOSOMAL PROTEIN L32"/>
    <property type="match status" value="1"/>
</dbReference>
<dbReference type="PANTHER" id="PTHR35534:SF1">
    <property type="entry name" value="LARGE RIBOSOMAL SUBUNIT PROTEIN BL32"/>
    <property type="match status" value="1"/>
</dbReference>
<dbReference type="Pfam" id="PF01783">
    <property type="entry name" value="Ribosomal_L32p"/>
    <property type="match status" value="1"/>
</dbReference>
<dbReference type="SUPFAM" id="SSF57829">
    <property type="entry name" value="Zn-binding ribosomal proteins"/>
    <property type="match status" value="1"/>
</dbReference>
<gene>
    <name evidence="1" type="primary">rpmF</name>
    <name type="ordered locus">BPSL2444</name>
</gene>
<sequence>MAVQQNKKSPSKRGMHRSHDFLTTSPLAVEPSTGEVHLRHHISPNGYYRGKKVVKTKND</sequence>
<name>RL32_BURPS</name>
<accession>Q63S81</accession>
<protein>
    <recommendedName>
        <fullName evidence="1">Large ribosomal subunit protein bL32</fullName>
    </recommendedName>
    <alternativeName>
        <fullName evidence="3">50S ribosomal protein L32</fullName>
    </alternativeName>
</protein>